<comment type="function">
    <text evidence="1">Enhances the phosphorylation and activation of AKT1 and AKT2.</text>
</comment>
<comment type="subunit">
    <text evidence="1">Interacts with AKT1 and AKT2 (via PH domain). Does not interact with AKT3 (By similarity).</text>
</comment>
<comment type="alternative products">
    <event type="alternative splicing"/>
    <isoform>
        <id>Q60945-1</id>
        <name>2</name>
        <name>Long</name>
        <name>Type B1</name>
        <name>p13 MTCP-1</name>
        <sequence type="displayed"/>
    </isoform>
    <isoform>
        <id>Q61908-1</id>
        <name>1</name>
        <name>Short</name>
        <name>Type A</name>
        <name>p8 MTCP-1</name>
        <sequence type="external"/>
    </isoform>
</comment>
<comment type="tissue specificity">
    <text>Not found at a significant level in any tissue.</text>
</comment>
<comment type="miscellaneous">
    <molecule>Isoform 2</molecule>
    <text>Shares a non-coding 5' exon with isoform 1 which is spliced to a different set of 3' exons encoding an unrelated protein.</text>
</comment>
<comment type="similarity">
    <text evidence="2">Belongs to the TCL1 family.</text>
</comment>
<proteinExistence type="evidence at transcript level"/>
<reference key="1">
    <citation type="journal article" date="1996" name="Blood">
        <title>Expression of p13MTCP1 is restricted to mature T-cell proliferations with t(X;14) translocations.</title>
        <authorList>
            <person name="Madani A."/>
            <person name="Choukroun V."/>
            <person name="Soulier J."/>
            <person name="Cacheux V."/>
            <person name="Claisse J.-F."/>
            <person name="Valensi F."/>
            <person name="Daliphard S."/>
            <person name="Cazin B."/>
            <person name="Levy V."/>
            <person name="Leblond V."/>
            <person name="Daniel M.-T."/>
            <person name="Sigaux F."/>
            <person name="Stern M.-H."/>
        </authorList>
    </citation>
    <scope>NUCLEOTIDE SEQUENCE [MRNA] (ISOFORM 2)</scope>
    <source>
        <tissue>T-cell</tissue>
    </source>
</reference>
<reference key="2">
    <citation type="journal article" date="2009" name="PLoS Biol.">
        <title>Lineage-specific biology revealed by a finished genome assembly of the mouse.</title>
        <authorList>
            <person name="Church D.M."/>
            <person name="Goodstadt L."/>
            <person name="Hillier L.W."/>
            <person name="Zody M.C."/>
            <person name="Goldstein S."/>
            <person name="She X."/>
            <person name="Bult C.J."/>
            <person name="Agarwala R."/>
            <person name="Cherry J.L."/>
            <person name="DiCuccio M."/>
            <person name="Hlavina W."/>
            <person name="Kapustin Y."/>
            <person name="Meric P."/>
            <person name="Maglott D."/>
            <person name="Birtle Z."/>
            <person name="Marques A.C."/>
            <person name="Graves T."/>
            <person name="Zhou S."/>
            <person name="Teague B."/>
            <person name="Potamousis K."/>
            <person name="Churas C."/>
            <person name="Place M."/>
            <person name="Herschleb J."/>
            <person name="Runnheim R."/>
            <person name="Forrest D."/>
            <person name="Amos-Landgraf J."/>
            <person name="Schwartz D.C."/>
            <person name="Cheng Z."/>
            <person name="Lindblad-Toh K."/>
            <person name="Eichler E.E."/>
            <person name="Ponting C.P."/>
        </authorList>
    </citation>
    <scope>NUCLEOTIDE SEQUENCE [LARGE SCALE GENOMIC DNA]</scope>
    <source>
        <strain>C57BL/6J</strain>
    </source>
</reference>
<accession>Q60945</accession>
<accession>A3KGA7</accession>
<evidence type="ECO:0000250" key="1"/>
<evidence type="ECO:0000305" key="2"/>
<dbReference type="EMBL" id="U32332">
    <property type="protein sequence ID" value="AAC52444.1"/>
    <property type="molecule type" value="mRNA"/>
</dbReference>
<dbReference type="EMBL" id="AL671860">
    <property type="status" value="NOT_ANNOTATED_CDS"/>
    <property type="molecule type" value="Genomic_DNA"/>
</dbReference>
<dbReference type="CCDS" id="CCDS30241.1">
    <molecule id="Q60945-1"/>
</dbReference>
<dbReference type="RefSeq" id="NP_001034462.1">
    <molecule id="Q60945-1"/>
    <property type="nucleotide sequence ID" value="NM_001039373.5"/>
</dbReference>
<dbReference type="SMR" id="Q60945"/>
<dbReference type="FunCoup" id="Q60945">
    <property type="interactions" value="480"/>
</dbReference>
<dbReference type="STRING" id="10090.ENSMUSP00000033542"/>
<dbReference type="PaxDb" id="10090-ENSMUSP00000033542"/>
<dbReference type="ProteomicsDB" id="290107">
    <molecule id="Q60945-1"/>
</dbReference>
<dbReference type="Pumba" id="Q60945"/>
<dbReference type="Antibodypedia" id="31399">
    <property type="antibodies" value="60 antibodies from 12 providers"/>
</dbReference>
<dbReference type="DNASU" id="17763"/>
<dbReference type="Ensembl" id="ENSMUST00000033542.11">
    <molecule id="Q60945-1"/>
    <property type="protein sequence ID" value="ENSMUSP00000033542.5"/>
    <property type="gene ID" value="ENSMUSG00000031200.17"/>
</dbReference>
<dbReference type="Ensembl" id="ENSMUST00000114081.2">
    <molecule id="Q60945-1"/>
    <property type="protein sequence ID" value="ENSMUSP00000109715.2"/>
    <property type="gene ID" value="ENSMUSG00000031200.17"/>
</dbReference>
<dbReference type="GeneID" id="17763"/>
<dbReference type="KEGG" id="mmu:17763"/>
<dbReference type="UCSC" id="uc009tpw.2">
    <molecule id="Q60945-1"/>
    <property type="organism name" value="mouse"/>
</dbReference>
<dbReference type="AGR" id="MGI:102699"/>
<dbReference type="CTD" id="4515"/>
<dbReference type="MGI" id="MGI:102699">
    <property type="gene designation" value="Mtcp1"/>
</dbReference>
<dbReference type="VEuPathDB" id="HostDB:ENSMUSG00000031200"/>
<dbReference type="eggNOG" id="ENOG502S5U8">
    <property type="taxonomic scope" value="Eukaryota"/>
</dbReference>
<dbReference type="GeneTree" id="ENSGT00390000006885"/>
<dbReference type="HOGENOM" id="CLU_168379_0_0_1"/>
<dbReference type="InParanoid" id="Q60945"/>
<dbReference type="OMA" id="DHLWVHR"/>
<dbReference type="OrthoDB" id="9413917at2759"/>
<dbReference type="PhylomeDB" id="Q60945"/>
<dbReference type="TreeFam" id="TF337903"/>
<dbReference type="BioGRID-ORCS" id="17763">
    <property type="hits" value="3 hits in 75 CRISPR screens"/>
</dbReference>
<dbReference type="ChiTaRS" id="Mtcp1">
    <property type="organism name" value="mouse"/>
</dbReference>
<dbReference type="PRO" id="PR:Q60945"/>
<dbReference type="Proteomes" id="UP000000589">
    <property type="component" value="Chromosome X"/>
</dbReference>
<dbReference type="RNAct" id="Q60945">
    <property type="molecule type" value="protein"/>
</dbReference>
<dbReference type="Bgee" id="ENSMUSG00000031200">
    <property type="expression patterns" value="Expressed in saccule of membranous labyrinth and 181 other cell types or tissues"/>
</dbReference>
<dbReference type="GO" id="GO:0005739">
    <property type="term" value="C:mitochondrion"/>
    <property type="evidence" value="ECO:0007005"/>
    <property type="project" value="MGI"/>
</dbReference>
<dbReference type="GO" id="GO:0019901">
    <property type="term" value="F:protein kinase binding"/>
    <property type="evidence" value="ECO:0007669"/>
    <property type="project" value="Ensembl"/>
</dbReference>
<dbReference type="GO" id="GO:0043539">
    <property type="term" value="F:protein serine/threonine kinase activator activity"/>
    <property type="evidence" value="ECO:0007669"/>
    <property type="project" value="Ensembl"/>
</dbReference>
<dbReference type="GO" id="GO:0035556">
    <property type="term" value="P:intracellular signal transduction"/>
    <property type="evidence" value="ECO:0007669"/>
    <property type="project" value="Ensembl"/>
</dbReference>
<dbReference type="FunFam" id="2.40.15.10:FF:000001">
    <property type="entry name" value="protein p13 MTCP-1"/>
    <property type="match status" value="1"/>
</dbReference>
<dbReference type="Gene3D" id="2.40.15.10">
    <property type="entry name" value="TCL1/MTCP1"/>
    <property type="match status" value="1"/>
</dbReference>
<dbReference type="InterPro" id="IPR004832">
    <property type="entry name" value="TCL1_MTCP1"/>
</dbReference>
<dbReference type="InterPro" id="IPR036672">
    <property type="entry name" value="TCL1_MTCP1_sf"/>
</dbReference>
<dbReference type="PANTHER" id="PTHR14060">
    <property type="entry name" value="PROTEIN P13 MTCP-1"/>
    <property type="match status" value="1"/>
</dbReference>
<dbReference type="PANTHER" id="PTHR14060:SF8">
    <property type="entry name" value="PROTEIN P13 MTCP-1"/>
    <property type="match status" value="1"/>
</dbReference>
<dbReference type="Pfam" id="PF01840">
    <property type="entry name" value="TCL1_MTCP1"/>
    <property type="match status" value="1"/>
</dbReference>
<dbReference type="SUPFAM" id="SSF50904">
    <property type="entry name" value="Oncogene products"/>
    <property type="match status" value="1"/>
</dbReference>
<keyword id="KW-0025">Alternative splicing</keyword>
<keyword id="KW-1185">Reference proteome</keyword>
<name>MTCP1_MOUSE</name>
<feature type="chain" id="PRO_0000184487" description="Protein p13 MTCP-1">
    <location>
        <begin position="1"/>
        <end position="107"/>
    </location>
</feature>
<protein>
    <recommendedName>
        <fullName>Protein p13 MTCP-1</fullName>
        <shortName>p13MTCP1</shortName>
    </recommendedName>
    <alternativeName>
        <fullName>Mature T-cell proliferation-1 type B1</fullName>
        <shortName>MTCP-1 type B1</shortName>
    </alternativeName>
</protein>
<sequence length="107" mass="12645">MAREDVGAPPDHLWVHQEGVYRDEYQRTWVAVVEEETSFLKARVQQVQVPLGDATKPSHLLTSQLPLMWQLYPEERYMDNNSRLWQIQHHLMVRGVQELLLKLLPDD</sequence>
<gene>
    <name type="primary">Mtcp1</name>
    <name type="synonym">C6.1b</name>
</gene>
<organism>
    <name type="scientific">Mus musculus</name>
    <name type="common">Mouse</name>
    <dbReference type="NCBI Taxonomy" id="10090"/>
    <lineage>
        <taxon>Eukaryota</taxon>
        <taxon>Metazoa</taxon>
        <taxon>Chordata</taxon>
        <taxon>Craniata</taxon>
        <taxon>Vertebrata</taxon>
        <taxon>Euteleostomi</taxon>
        <taxon>Mammalia</taxon>
        <taxon>Eutheria</taxon>
        <taxon>Euarchontoglires</taxon>
        <taxon>Glires</taxon>
        <taxon>Rodentia</taxon>
        <taxon>Myomorpha</taxon>
        <taxon>Muroidea</taxon>
        <taxon>Muridae</taxon>
        <taxon>Murinae</taxon>
        <taxon>Mus</taxon>
        <taxon>Mus</taxon>
    </lineage>
</organism>